<comment type="function">
    <text evidence="1">Key component of the proton channel; it plays a direct role in the translocation of protons across the membrane.</text>
</comment>
<comment type="subunit">
    <text evidence="1">F-type ATPases have 2 components, CF(1) - the catalytic core - and CF(0) - the membrane proton channel. CF(1) has five subunits: alpha(3), beta(3), gamma(1), delta(1), epsilon(1). CF(0) has three main subunits: a(1), b(2) and c(9-12). The alpha and beta chains form an alternating ring which encloses part of the gamma chain. CF(1) is attached to CF(0) by a central stalk formed by the gamma and epsilon chains, while a peripheral stalk is formed by the delta and b chains.</text>
</comment>
<comment type="subcellular location">
    <subcellularLocation>
        <location evidence="1">Cell inner membrane</location>
        <topology evidence="1">Multi-pass membrane protein</topology>
    </subcellularLocation>
</comment>
<comment type="similarity">
    <text evidence="1">Belongs to the ATPase A chain family.</text>
</comment>
<keyword id="KW-0066">ATP synthesis</keyword>
<keyword id="KW-0997">Cell inner membrane</keyword>
<keyword id="KW-1003">Cell membrane</keyword>
<keyword id="KW-0138">CF(0)</keyword>
<keyword id="KW-0375">Hydrogen ion transport</keyword>
<keyword id="KW-0406">Ion transport</keyword>
<keyword id="KW-0472">Membrane</keyword>
<keyword id="KW-0812">Transmembrane</keyword>
<keyword id="KW-1133">Transmembrane helix</keyword>
<keyword id="KW-0813">Transport</keyword>
<name>ATP6_ACTPJ</name>
<reference key="1">
    <citation type="journal article" date="2008" name="PLoS ONE">
        <title>Genome biology of Actinobacillus pleuropneumoniae JL03, an isolate of serotype 3 prevalent in China.</title>
        <authorList>
            <person name="Xu Z."/>
            <person name="Zhou Y."/>
            <person name="Li L."/>
            <person name="Zhou R."/>
            <person name="Xiao S."/>
            <person name="Wan Y."/>
            <person name="Zhang S."/>
            <person name="Wang K."/>
            <person name="Li W."/>
            <person name="Li L."/>
            <person name="Jin H."/>
            <person name="Kang M."/>
            <person name="Dalai B."/>
            <person name="Li T."/>
            <person name="Liu L."/>
            <person name="Cheng Y."/>
            <person name="Zhang L."/>
            <person name="Xu T."/>
            <person name="Zheng H."/>
            <person name="Pu S."/>
            <person name="Wang B."/>
            <person name="Gu W."/>
            <person name="Zhang X.L."/>
            <person name="Zhu G.-F."/>
            <person name="Wang S."/>
            <person name="Zhao G.-P."/>
            <person name="Chen H."/>
        </authorList>
    </citation>
    <scope>NUCLEOTIDE SEQUENCE [LARGE SCALE GENOMIC DNA]</scope>
    <source>
        <strain>JL03</strain>
    </source>
</reference>
<evidence type="ECO:0000255" key="1">
    <source>
        <dbReference type="HAMAP-Rule" id="MF_01393"/>
    </source>
</evidence>
<organism>
    <name type="scientific">Actinobacillus pleuropneumoniae serotype 3 (strain JL03)</name>
    <dbReference type="NCBI Taxonomy" id="434271"/>
    <lineage>
        <taxon>Bacteria</taxon>
        <taxon>Pseudomonadati</taxon>
        <taxon>Pseudomonadota</taxon>
        <taxon>Gammaproteobacteria</taxon>
        <taxon>Pasteurellales</taxon>
        <taxon>Pasteurellaceae</taxon>
        <taxon>Actinobacillus</taxon>
    </lineage>
</organism>
<protein>
    <recommendedName>
        <fullName evidence="1">ATP synthase subunit a</fullName>
    </recommendedName>
    <alternativeName>
        <fullName evidence="1">ATP synthase F0 sector subunit a</fullName>
    </alternativeName>
    <alternativeName>
        <fullName evidence="1">F-ATPase subunit 6</fullName>
    </alternativeName>
</protein>
<proteinExistence type="inferred from homology"/>
<accession>B0BRX8</accession>
<sequence length="262" mass="29206">MAGTTAEYISHHLSFLASGDGFWAVHLDTLFFSLLAGVIFLFVFSRVAKNATSGVPGKLQCFVEIVIGWVDGLVKDNFHGPRNVIAPLALTIFCWVFIMNAIDLVPVDFLPQLANMFGIHYLRAVPTADISATLGMSICVFFLILFYTVKSKGFGGLVKEYTLHPFNHWAFIPVNFILETVTLLAKPISLAFRLFGNMYAGELIFILIAVMYMADNFALQALGIPLHLVWAIFHILVITLQAFIFMMLTIVYLSIAYNKADH</sequence>
<dbReference type="EMBL" id="CP000687">
    <property type="protein sequence ID" value="ABY70237.1"/>
    <property type="molecule type" value="Genomic_DNA"/>
</dbReference>
<dbReference type="RefSeq" id="WP_005599075.1">
    <property type="nucleotide sequence ID" value="NC_010278.1"/>
</dbReference>
<dbReference type="SMR" id="B0BRX8"/>
<dbReference type="GeneID" id="48599942"/>
<dbReference type="KEGG" id="apj:APJL_1685"/>
<dbReference type="HOGENOM" id="CLU_041018_1_0_6"/>
<dbReference type="Proteomes" id="UP000008547">
    <property type="component" value="Chromosome"/>
</dbReference>
<dbReference type="GO" id="GO:0005886">
    <property type="term" value="C:plasma membrane"/>
    <property type="evidence" value="ECO:0007669"/>
    <property type="project" value="UniProtKB-SubCell"/>
</dbReference>
<dbReference type="GO" id="GO:0045259">
    <property type="term" value="C:proton-transporting ATP synthase complex"/>
    <property type="evidence" value="ECO:0007669"/>
    <property type="project" value="UniProtKB-KW"/>
</dbReference>
<dbReference type="GO" id="GO:0046933">
    <property type="term" value="F:proton-transporting ATP synthase activity, rotational mechanism"/>
    <property type="evidence" value="ECO:0007669"/>
    <property type="project" value="UniProtKB-UniRule"/>
</dbReference>
<dbReference type="GO" id="GO:0042777">
    <property type="term" value="P:proton motive force-driven plasma membrane ATP synthesis"/>
    <property type="evidence" value="ECO:0007669"/>
    <property type="project" value="TreeGrafter"/>
</dbReference>
<dbReference type="CDD" id="cd00310">
    <property type="entry name" value="ATP-synt_Fo_a_6"/>
    <property type="match status" value="1"/>
</dbReference>
<dbReference type="FunFam" id="1.20.120.220:FF:000002">
    <property type="entry name" value="ATP synthase subunit a"/>
    <property type="match status" value="1"/>
</dbReference>
<dbReference type="Gene3D" id="1.20.120.220">
    <property type="entry name" value="ATP synthase, F0 complex, subunit A"/>
    <property type="match status" value="1"/>
</dbReference>
<dbReference type="HAMAP" id="MF_01393">
    <property type="entry name" value="ATP_synth_a_bact"/>
    <property type="match status" value="1"/>
</dbReference>
<dbReference type="InterPro" id="IPR045082">
    <property type="entry name" value="ATP_syn_F0_a_bact/chloroplast"/>
</dbReference>
<dbReference type="InterPro" id="IPR000568">
    <property type="entry name" value="ATP_synth_F0_asu"/>
</dbReference>
<dbReference type="InterPro" id="IPR023011">
    <property type="entry name" value="ATP_synth_F0_asu_AS"/>
</dbReference>
<dbReference type="InterPro" id="IPR035908">
    <property type="entry name" value="F0_ATP_A_sf"/>
</dbReference>
<dbReference type="NCBIfam" id="TIGR01131">
    <property type="entry name" value="ATP_synt_6_or_A"/>
    <property type="match status" value="1"/>
</dbReference>
<dbReference type="NCBIfam" id="NF004477">
    <property type="entry name" value="PRK05815.1-1"/>
    <property type="match status" value="1"/>
</dbReference>
<dbReference type="PANTHER" id="PTHR42823">
    <property type="entry name" value="ATP SYNTHASE SUBUNIT A, CHLOROPLASTIC"/>
    <property type="match status" value="1"/>
</dbReference>
<dbReference type="PANTHER" id="PTHR42823:SF3">
    <property type="entry name" value="ATP SYNTHASE SUBUNIT A, CHLOROPLASTIC"/>
    <property type="match status" value="1"/>
</dbReference>
<dbReference type="Pfam" id="PF00119">
    <property type="entry name" value="ATP-synt_A"/>
    <property type="match status" value="1"/>
</dbReference>
<dbReference type="PRINTS" id="PR00123">
    <property type="entry name" value="ATPASEA"/>
</dbReference>
<dbReference type="SUPFAM" id="SSF81336">
    <property type="entry name" value="F1F0 ATP synthase subunit A"/>
    <property type="match status" value="1"/>
</dbReference>
<dbReference type="PROSITE" id="PS00449">
    <property type="entry name" value="ATPASE_A"/>
    <property type="match status" value="1"/>
</dbReference>
<feature type="chain" id="PRO_0000362223" description="ATP synthase subunit a">
    <location>
        <begin position="1"/>
        <end position="262"/>
    </location>
</feature>
<feature type="transmembrane region" description="Helical" evidence="1">
    <location>
        <begin position="24"/>
        <end position="44"/>
    </location>
</feature>
<feature type="transmembrane region" description="Helical" evidence="1">
    <location>
        <begin position="84"/>
        <end position="104"/>
    </location>
</feature>
<feature type="transmembrane region" description="Helical" evidence="1">
    <location>
        <begin position="129"/>
        <end position="149"/>
    </location>
</feature>
<feature type="transmembrane region" description="Helical" evidence="1">
    <location>
        <begin position="194"/>
        <end position="214"/>
    </location>
</feature>
<feature type="transmembrane region" description="Helical" evidence="1">
    <location>
        <begin position="228"/>
        <end position="248"/>
    </location>
</feature>
<gene>
    <name evidence="1" type="primary">atpB</name>
    <name type="ordered locus">APJL_1685</name>
</gene>